<evidence type="ECO:0000255" key="1">
    <source>
        <dbReference type="HAMAP-Rule" id="MF_00181"/>
    </source>
</evidence>
<comment type="function">
    <text evidence="1">Presumably involved in the processing and regular turnover of intracellular proteins. Catalyzes the removal of unsubstituted N-terminal amino acids from various peptides.</text>
</comment>
<comment type="catalytic activity">
    <reaction evidence="1">
        <text>Release of an N-terminal amino acid, Xaa-|-Yaa-, in which Xaa is preferably Leu, but may be other amino acids including Pro although not Arg or Lys, and Yaa may be Pro. Amino acid amides and methyl esters are also readily hydrolyzed, but rates on arylamides are exceedingly low.</text>
        <dbReference type="EC" id="3.4.11.1"/>
    </reaction>
</comment>
<comment type="catalytic activity">
    <reaction evidence="1">
        <text>Release of an N-terminal amino acid, preferentially leucine, but not glutamic or aspartic acids.</text>
        <dbReference type="EC" id="3.4.11.10"/>
    </reaction>
</comment>
<comment type="cofactor">
    <cofactor evidence="1">
        <name>Mn(2+)</name>
        <dbReference type="ChEBI" id="CHEBI:29035"/>
    </cofactor>
    <text evidence="1">Binds 2 manganese ions per subunit.</text>
</comment>
<comment type="subcellular location">
    <subcellularLocation>
        <location evidence="1">Cytoplasm</location>
    </subcellularLocation>
</comment>
<comment type="similarity">
    <text evidence="1">Belongs to the peptidase M17 family.</text>
</comment>
<accession>C4K346</accession>
<protein>
    <recommendedName>
        <fullName evidence="1">Probable cytosol aminopeptidase</fullName>
        <ecNumber evidence="1">3.4.11.1</ecNumber>
    </recommendedName>
    <alternativeName>
        <fullName evidence="1">Leucine aminopeptidase</fullName>
        <shortName evidence="1">LAP</shortName>
        <ecNumber evidence="1">3.4.11.10</ecNumber>
    </alternativeName>
    <alternativeName>
        <fullName evidence="1">Leucyl aminopeptidase</fullName>
    </alternativeName>
</protein>
<gene>
    <name evidence="1" type="primary">pepA</name>
    <name type="ordered locus">HDEF_0221</name>
</gene>
<proteinExistence type="inferred from homology"/>
<organism>
    <name type="scientific">Hamiltonella defensa subsp. Acyrthosiphon pisum (strain 5AT)</name>
    <dbReference type="NCBI Taxonomy" id="572265"/>
    <lineage>
        <taxon>Bacteria</taxon>
        <taxon>Pseudomonadati</taxon>
        <taxon>Pseudomonadota</taxon>
        <taxon>Gammaproteobacteria</taxon>
        <taxon>Enterobacterales</taxon>
        <taxon>Enterobacteriaceae</taxon>
        <taxon>aphid secondary symbionts</taxon>
        <taxon>Candidatus Hamiltonella</taxon>
    </lineage>
</organism>
<dbReference type="EC" id="3.4.11.1" evidence="1"/>
<dbReference type="EC" id="3.4.11.10" evidence="1"/>
<dbReference type="EMBL" id="CP001277">
    <property type="protein sequence ID" value="ACQ66989.1"/>
    <property type="molecule type" value="Genomic_DNA"/>
</dbReference>
<dbReference type="RefSeq" id="WP_012737954.1">
    <property type="nucleotide sequence ID" value="NC_012751.1"/>
</dbReference>
<dbReference type="SMR" id="C4K346"/>
<dbReference type="STRING" id="572265.HDEF_0221"/>
<dbReference type="MEROPS" id="M17.003"/>
<dbReference type="GeneID" id="66260147"/>
<dbReference type="KEGG" id="hde:HDEF_0221"/>
<dbReference type="eggNOG" id="COG0260">
    <property type="taxonomic scope" value="Bacteria"/>
</dbReference>
<dbReference type="HOGENOM" id="CLU_013734_2_2_6"/>
<dbReference type="Proteomes" id="UP000002334">
    <property type="component" value="Chromosome"/>
</dbReference>
<dbReference type="GO" id="GO:0005737">
    <property type="term" value="C:cytoplasm"/>
    <property type="evidence" value="ECO:0007669"/>
    <property type="project" value="UniProtKB-SubCell"/>
</dbReference>
<dbReference type="GO" id="GO:0030145">
    <property type="term" value="F:manganese ion binding"/>
    <property type="evidence" value="ECO:0007669"/>
    <property type="project" value="UniProtKB-UniRule"/>
</dbReference>
<dbReference type="GO" id="GO:0070006">
    <property type="term" value="F:metalloaminopeptidase activity"/>
    <property type="evidence" value="ECO:0007669"/>
    <property type="project" value="InterPro"/>
</dbReference>
<dbReference type="GO" id="GO:0006508">
    <property type="term" value="P:proteolysis"/>
    <property type="evidence" value="ECO:0007669"/>
    <property type="project" value="UniProtKB-KW"/>
</dbReference>
<dbReference type="CDD" id="cd00433">
    <property type="entry name" value="Peptidase_M17"/>
    <property type="match status" value="1"/>
</dbReference>
<dbReference type="FunFam" id="3.40.630.10:FF:000004">
    <property type="entry name" value="Probable cytosol aminopeptidase"/>
    <property type="match status" value="1"/>
</dbReference>
<dbReference type="Gene3D" id="3.40.220.10">
    <property type="entry name" value="Leucine Aminopeptidase, subunit E, domain 1"/>
    <property type="match status" value="1"/>
</dbReference>
<dbReference type="Gene3D" id="3.40.630.10">
    <property type="entry name" value="Zn peptidases"/>
    <property type="match status" value="1"/>
</dbReference>
<dbReference type="HAMAP" id="MF_00181">
    <property type="entry name" value="Cytosol_peptidase_M17"/>
    <property type="match status" value="1"/>
</dbReference>
<dbReference type="InterPro" id="IPR011356">
    <property type="entry name" value="Leucine_aapep/pepB"/>
</dbReference>
<dbReference type="InterPro" id="IPR043472">
    <property type="entry name" value="Macro_dom-like"/>
</dbReference>
<dbReference type="InterPro" id="IPR000819">
    <property type="entry name" value="Peptidase_M17_C"/>
</dbReference>
<dbReference type="InterPro" id="IPR023042">
    <property type="entry name" value="Peptidase_M17_leu_NH2_pept"/>
</dbReference>
<dbReference type="InterPro" id="IPR008283">
    <property type="entry name" value="Peptidase_M17_N"/>
</dbReference>
<dbReference type="NCBIfam" id="NF002072">
    <property type="entry name" value="PRK00913.1-1"/>
    <property type="match status" value="1"/>
</dbReference>
<dbReference type="NCBIfam" id="NF002073">
    <property type="entry name" value="PRK00913.1-2"/>
    <property type="match status" value="1"/>
</dbReference>
<dbReference type="NCBIfam" id="NF002074">
    <property type="entry name" value="PRK00913.1-4"/>
    <property type="match status" value="1"/>
</dbReference>
<dbReference type="PANTHER" id="PTHR11963:SF23">
    <property type="entry name" value="CYTOSOL AMINOPEPTIDASE"/>
    <property type="match status" value="1"/>
</dbReference>
<dbReference type="PANTHER" id="PTHR11963">
    <property type="entry name" value="LEUCINE AMINOPEPTIDASE-RELATED"/>
    <property type="match status" value="1"/>
</dbReference>
<dbReference type="Pfam" id="PF00883">
    <property type="entry name" value="Peptidase_M17"/>
    <property type="match status" value="1"/>
</dbReference>
<dbReference type="Pfam" id="PF02789">
    <property type="entry name" value="Peptidase_M17_N"/>
    <property type="match status" value="1"/>
</dbReference>
<dbReference type="PRINTS" id="PR00481">
    <property type="entry name" value="LAMNOPPTDASE"/>
</dbReference>
<dbReference type="SUPFAM" id="SSF52949">
    <property type="entry name" value="Macro domain-like"/>
    <property type="match status" value="1"/>
</dbReference>
<dbReference type="SUPFAM" id="SSF53187">
    <property type="entry name" value="Zn-dependent exopeptidases"/>
    <property type="match status" value="1"/>
</dbReference>
<dbReference type="PROSITE" id="PS00631">
    <property type="entry name" value="CYTOSOL_AP"/>
    <property type="match status" value="1"/>
</dbReference>
<reference key="1">
    <citation type="journal article" date="2009" name="Proc. Natl. Acad. Sci. U.S.A.">
        <title>Hamiltonella defensa, genome evolution of protective bacterial endosymbiont from pathogenic ancestors.</title>
        <authorList>
            <person name="Degnan P.H."/>
            <person name="Yu Y."/>
            <person name="Sisneros N."/>
            <person name="Wing R.A."/>
            <person name="Moran N.A."/>
        </authorList>
    </citation>
    <scope>NUCLEOTIDE SEQUENCE [LARGE SCALE GENOMIC DNA]</scope>
    <source>
        <strain>5AT</strain>
    </source>
</reference>
<name>AMPA_HAMD5</name>
<sequence length="501" mass="54386">MEFKVNSECSEKQSSDCIVIGIFESGEFSPSAEKVNKISHGYLKGLPQNADLQGKAEQALLLHHVPHVAAERVLLIGCGKEEELDERRYKKLIKKMVNTLKETGAKNVFCYLPELKVKGKDIDWKIRSAIEVIQDALYCFDHYKSTKTLHALNQITFIVTATQTKAAQTAIQEGIALAVGINEAKNLANTPPNICNPAYLNASARKWAEKFKNVRVSVVNEDEMKKLGMNAYLAVGQGSKNESLMSIIEYKSGKIPAGTKPIVLVGKGMTFDSGGISIKPSQNMDEMKYDMCGAATVFGVMNVVAELNLPLYVIGVLAGAENMPGGNAYRPGDILTTLSGQTVEVLNTDAEGRLVLCDALTYVERFDPELVIDIATLTGACVVALGHHMSGLMSNHAPLAEDLLHASEQSGDLAWRLPLGEEYQEQLDSNFADMANIGGRTAGAITAGCFLSRFTHQYHWAHLDIAGTAWRTGKEKGATGRPVALLSQFLLNKALAQKQGA</sequence>
<feature type="chain" id="PRO_1000203831" description="Probable cytosol aminopeptidase">
    <location>
        <begin position="1"/>
        <end position="501"/>
    </location>
</feature>
<feature type="active site" evidence="1">
    <location>
        <position position="279"/>
    </location>
</feature>
<feature type="active site" evidence="1">
    <location>
        <position position="353"/>
    </location>
</feature>
<feature type="binding site" evidence="1">
    <location>
        <position position="267"/>
    </location>
    <ligand>
        <name>Mn(2+)</name>
        <dbReference type="ChEBI" id="CHEBI:29035"/>
        <label>2</label>
    </ligand>
</feature>
<feature type="binding site" evidence="1">
    <location>
        <position position="272"/>
    </location>
    <ligand>
        <name>Mn(2+)</name>
        <dbReference type="ChEBI" id="CHEBI:29035"/>
        <label>1</label>
    </ligand>
</feature>
<feature type="binding site" evidence="1">
    <location>
        <position position="272"/>
    </location>
    <ligand>
        <name>Mn(2+)</name>
        <dbReference type="ChEBI" id="CHEBI:29035"/>
        <label>2</label>
    </ligand>
</feature>
<feature type="binding site" evidence="1">
    <location>
        <position position="290"/>
    </location>
    <ligand>
        <name>Mn(2+)</name>
        <dbReference type="ChEBI" id="CHEBI:29035"/>
        <label>2</label>
    </ligand>
</feature>
<feature type="binding site" evidence="1">
    <location>
        <position position="349"/>
    </location>
    <ligand>
        <name>Mn(2+)</name>
        <dbReference type="ChEBI" id="CHEBI:29035"/>
        <label>1</label>
    </ligand>
</feature>
<feature type="binding site" evidence="1">
    <location>
        <position position="351"/>
    </location>
    <ligand>
        <name>Mn(2+)</name>
        <dbReference type="ChEBI" id="CHEBI:29035"/>
        <label>1</label>
    </ligand>
</feature>
<feature type="binding site" evidence="1">
    <location>
        <position position="351"/>
    </location>
    <ligand>
        <name>Mn(2+)</name>
        <dbReference type="ChEBI" id="CHEBI:29035"/>
        <label>2</label>
    </ligand>
</feature>
<keyword id="KW-0031">Aminopeptidase</keyword>
<keyword id="KW-0963">Cytoplasm</keyword>
<keyword id="KW-0378">Hydrolase</keyword>
<keyword id="KW-0464">Manganese</keyword>
<keyword id="KW-0479">Metal-binding</keyword>
<keyword id="KW-0645">Protease</keyword>